<evidence type="ECO:0000250" key="1"/>
<evidence type="ECO:0000255" key="2"/>
<evidence type="ECO:0000256" key="3">
    <source>
        <dbReference type="SAM" id="MobiDB-lite"/>
    </source>
</evidence>
<evidence type="ECO:0000305" key="4"/>
<dbReference type="EMBL" id="AL021711">
    <property type="protein sequence ID" value="CAA16762.1"/>
    <property type="status" value="ALT_SEQ"/>
    <property type="molecule type" value="Genomic_DNA"/>
</dbReference>
<dbReference type="EMBL" id="AL161550">
    <property type="protein sequence ID" value="CAB78907.1"/>
    <property type="status" value="ALT_SEQ"/>
    <property type="molecule type" value="Genomic_DNA"/>
</dbReference>
<dbReference type="EMBL" id="CP002687">
    <property type="protein sequence ID" value="AEE84134.1"/>
    <property type="molecule type" value="Genomic_DNA"/>
</dbReference>
<dbReference type="PIR" id="T04426">
    <property type="entry name" value="T04426"/>
</dbReference>
<dbReference type="RefSeq" id="NP_193640.4">
    <property type="nucleotide sequence ID" value="NM_118023.5"/>
</dbReference>
<dbReference type="SMR" id="P0CB16"/>
<dbReference type="BioGRID" id="12936">
    <property type="interactions" value="1"/>
</dbReference>
<dbReference type="FunCoup" id="P0CB16">
    <property type="interactions" value="13"/>
</dbReference>
<dbReference type="STRING" id="3702.P0CB16"/>
<dbReference type="iPTMnet" id="P0CB16"/>
<dbReference type="PaxDb" id="3702-AT4G19050.1"/>
<dbReference type="ProteomicsDB" id="224322"/>
<dbReference type="EnsemblPlants" id="AT4G19050.1">
    <property type="protein sequence ID" value="AT4G19050.1"/>
    <property type="gene ID" value="AT4G19050"/>
</dbReference>
<dbReference type="GeneID" id="827643"/>
<dbReference type="Gramene" id="AT4G19050.1">
    <property type="protein sequence ID" value="AT4G19050.1"/>
    <property type="gene ID" value="AT4G19050"/>
</dbReference>
<dbReference type="KEGG" id="ath:AT4G19050"/>
<dbReference type="Araport" id="AT4G19050"/>
<dbReference type="TAIR" id="AT4G19050"/>
<dbReference type="eggNOG" id="KOG0440">
    <property type="taxonomic scope" value="Eukaryota"/>
</dbReference>
<dbReference type="HOGENOM" id="CLU_004092_0_0_1"/>
<dbReference type="InParanoid" id="P0CB16"/>
<dbReference type="OMA" id="WSQIKEC"/>
<dbReference type="PRO" id="PR:P0CB16"/>
<dbReference type="Proteomes" id="UP000006548">
    <property type="component" value="Chromosome 4"/>
</dbReference>
<dbReference type="ExpressionAtlas" id="P0CB16">
    <property type="expression patterns" value="baseline and differential"/>
</dbReference>
<dbReference type="GO" id="GO:0043531">
    <property type="term" value="F:ADP binding"/>
    <property type="evidence" value="ECO:0007669"/>
    <property type="project" value="InterPro"/>
</dbReference>
<dbReference type="GO" id="GO:0005524">
    <property type="term" value="F:ATP binding"/>
    <property type="evidence" value="ECO:0007669"/>
    <property type="project" value="UniProtKB-KW"/>
</dbReference>
<dbReference type="GO" id="GO:0006952">
    <property type="term" value="P:defense response"/>
    <property type="evidence" value="ECO:0007669"/>
    <property type="project" value="UniProtKB-KW"/>
</dbReference>
<dbReference type="Gene3D" id="3.40.50.300">
    <property type="entry name" value="P-loop containing nucleotide triphosphate hydrolases"/>
    <property type="match status" value="1"/>
</dbReference>
<dbReference type="Gene3D" id="3.80.10.10">
    <property type="entry name" value="Ribonuclease Inhibitor"/>
    <property type="match status" value="4"/>
</dbReference>
<dbReference type="InterPro" id="IPR032675">
    <property type="entry name" value="LRR_dom_sf"/>
</dbReference>
<dbReference type="InterPro" id="IPR002182">
    <property type="entry name" value="NB-ARC"/>
</dbReference>
<dbReference type="InterPro" id="IPR027417">
    <property type="entry name" value="P-loop_NTPase"/>
</dbReference>
<dbReference type="PANTHER" id="PTHR47186:SF20">
    <property type="entry name" value="DISEASE RESISTANCE PROTEIN RPS5-LIKE"/>
    <property type="match status" value="1"/>
</dbReference>
<dbReference type="PANTHER" id="PTHR47186">
    <property type="entry name" value="LEUCINE-RICH REPEAT-CONTAINING PROTEIN 57"/>
    <property type="match status" value="1"/>
</dbReference>
<dbReference type="Pfam" id="PF23247">
    <property type="entry name" value="LRR_RPS2"/>
    <property type="match status" value="1"/>
</dbReference>
<dbReference type="Pfam" id="PF00931">
    <property type="entry name" value="NB-ARC"/>
    <property type="match status" value="1"/>
</dbReference>
<dbReference type="PRINTS" id="PR00364">
    <property type="entry name" value="DISEASERSIST"/>
</dbReference>
<dbReference type="SUPFAM" id="SSF52058">
    <property type="entry name" value="L domain-like"/>
    <property type="match status" value="1"/>
</dbReference>
<dbReference type="SUPFAM" id="SSF52540">
    <property type="entry name" value="P-loop containing nucleoside triphosphate hydrolases"/>
    <property type="match status" value="1"/>
</dbReference>
<dbReference type="SUPFAM" id="SSF52047">
    <property type="entry name" value="RNI-like"/>
    <property type="match status" value="2"/>
</dbReference>
<organism>
    <name type="scientific">Arabidopsis thaliana</name>
    <name type="common">Mouse-ear cress</name>
    <dbReference type="NCBI Taxonomy" id="3702"/>
    <lineage>
        <taxon>Eukaryota</taxon>
        <taxon>Viridiplantae</taxon>
        <taxon>Streptophyta</taxon>
        <taxon>Embryophyta</taxon>
        <taxon>Tracheophyta</taxon>
        <taxon>Spermatophyta</taxon>
        <taxon>Magnoliopsida</taxon>
        <taxon>eudicotyledons</taxon>
        <taxon>Gunneridae</taxon>
        <taxon>Pentapetalae</taxon>
        <taxon>rosids</taxon>
        <taxon>malvids</taxon>
        <taxon>Brassicales</taxon>
        <taxon>Brassicaceae</taxon>
        <taxon>Camelineae</taxon>
        <taxon>Arabidopsis</taxon>
    </lineage>
</organism>
<keyword id="KW-0067">ATP-binding</keyword>
<keyword id="KW-0433">Leucine-rich repeat</keyword>
<keyword id="KW-0547">Nucleotide-binding</keyword>
<keyword id="KW-0611">Plant defense</keyword>
<keyword id="KW-1185">Reference proteome</keyword>
<keyword id="KW-0677">Repeat</keyword>
<proteinExistence type="inferred from homology"/>
<gene>
    <name type="ordered locus">At4g19050</name>
    <name type="ORF">F13C5.220</name>
    <name type="ORF">T18B16.1</name>
</gene>
<accession>P0CB16</accession>
<accession>O50052</accession>
<comment type="function">
    <text evidence="1">Potential disease resistance protein.</text>
</comment>
<comment type="domain">
    <text evidence="1">The LRR repeats probably act as specificity determinant of pathogen recognition.</text>
</comment>
<comment type="similarity">
    <text evidence="4">Belongs to the disease resistance NB-LRR family.</text>
</comment>
<comment type="sequence caution" evidence="4">
    <conflict type="erroneous gene model prediction">
        <sequence resource="EMBL-CDS" id="CAA16762"/>
    </conflict>
    <text>The predicted gene At4g19050 has been split into 2 genes: At4g19045 and At4g19050.</text>
</comment>
<comment type="sequence caution" evidence="4">
    <conflict type="erroneous gene model prediction">
        <sequence resource="EMBL-CDS" id="CAB78907"/>
    </conflict>
    <text>The predicted gene At4g19050 has been split into 2 genes: At4g19045 and At4g19050.</text>
</comment>
<comment type="online information" name="NIB-LRRS">
    <link uri="http://niblrrs.ucdavis.edu"/>
    <text>Functional and comparative genomics of disease resistance gene homologs</text>
</comment>
<sequence>MEKQDQTSREEILKKIMDSLGQDGVPSKTVLVGEAGIGKTWLAKEVSQRVTQEKYNVLWLHLNKKIEDEKSLYEILAAQLSIIYEFEEGEEPDELDYPLESLKEKIKEEMIKHKKDNLLLILDDEGSMTTEEDVMQELNLQDFLKEYSAVKILVTRRDEREEKESTTIKVGPLTEKESLDLLHDAEDLLTSFTSEDWPVLLKRLCDNKEIKEPTLMSCILSKSKGLPAAIVVLIKSLNSIKSMSAKQRKIFKELILSSKSLDEAAASKNAIDRSRYNPVLQLSYELLKPDETVKRPVIACFWHILDFYKYSGCAYYRDLIVHWMLEGYFDPVKSVDKAYQEGHSILMDFMNRGILKIQEDNMVVPEFSMSNLLDLQDCGFFGRSSLGFDRVYGGDKRKGLGKIILIDDMIQTIQSKKKNITTIIASGNRLRREVHGKFFEKPEMQDLEVVVLFEPTFHELVLSLSKLKKLRVLVIRDCDLIDNIDKLSGLQGLHVLEVSGASSLVNIPDDFFKNMTQLQSLNLSGLAIKSSPSTIEKLSMLRCFILRHCSELQDLPNFIVETRKLEVIDIHGARKLESYFDRVKDWKDYKGKNKNFAQLQLLEHLDFSETKIIRLPIFHLKDSTNDFSTMPILTRLLLRNCTRLKRLPQLRPLTNLQILDACGATDLVEMLEVCLEEKKELRILDMSKTSLPELADTIADVVNLNKLLLRNCSLIEELPSIEKLTHLEVFDVSGCIKLKNINGSFGEMSYLHEVNLSETNLSELPDKISELSNLKELIIRKCSKLKTLPNLEKLTNLEIFDVSGCTELETIEGSFENLSCLHKVNLSETNLGELPNKISELSNLKELILRNCSKLKALPNLEKLTHLVIFDVSGCTNLDKIEESFESMSYLCEVNLSGTNLKTFPELPKQSILCSSKRIVLADSSCIERDQWSQIKECLTSKSEGSSFSNVGEKTREKLLYHGNRYRVIDPEVPLNIDIVDIKRSTDLKTEYIAKAEYVSIAENGSKSVSSLFDELQMASVKGCWVERCKNMDVLFESDEQLEKEKSSSPSLQTLWISNLPLLTSLYSSKGGFIFKNLKKLSVDCCPSIKWLFPEIPDNLEILRVKFCDKLERLFEVKAGELSKLRKLHLLDLPVLSVLGANFPNLEKCTIEKCPKLKAREDEPRIGARITDEISEDQPHKNTIGPETQTPTQPTKATDTV</sequence>
<name>DRL25_ARATH</name>
<feature type="chain" id="PRO_0000212757" description="Putative disease resistance protein At4g19050">
    <location>
        <begin position="1"/>
        <end position="1201"/>
    </location>
</feature>
<feature type="repeat" description="LRR 1">
    <location>
        <begin position="469"/>
        <end position="491"/>
    </location>
</feature>
<feature type="repeat" description="LRR 2">
    <location>
        <begin position="492"/>
        <end position="514"/>
    </location>
</feature>
<feature type="repeat" description="LRR 3">
    <location>
        <begin position="517"/>
        <end position="539"/>
    </location>
</feature>
<feature type="repeat" description="LRR 4">
    <location>
        <begin position="540"/>
        <end position="562"/>
    </location>
</feature>
<feature type="repeat" description="LRR 5">
    <location>
        <begin position="680"/>
        <end position="701"/>
    </location>
</feature>
<feature type="repeat" description="LRR 6">
    <location>
        <begin position="703"/>
        <end position="725"/>
    </location>
</feature>
<feature type="repeat" description="LRR 7">
    <location>
        <begin position="726"/>
        <end position="748"/>
    </location>
</feature>
<feature type="repeat" description="LRR 8">
    <location>
        <begin position="750"/>
        <end position="771"/>
    </location>
</feature>
<feature type="repeat" description="LRR 9">
    <location>
        <begin position="773"/>
        <end position="795"/>
    </location>
</feature>
<feature type="repeat" description="LRR 10">
    <location>
        <begin position="796"/>
        <end position="818"/>
    </location>
</feature>
<feature type="repeat" description="LRR 11">
    <location>
        <begin position="820"/>
        <end position="841"/>
    </location>
</feature>
<feature type="repeat" description="LRR 12">
    <location>
        <begin position="843"/>
        <end position="865"/>
    </location>
</feature>
<feature type="repeat" description="LRR 13">
    <location>
        <begin position="866"/>
        <end position="888"/>
    </location>
</feature>
<feature type="repeat" description="LRR 14">
    <location>
        <begin position="890"/>
        <end position="911"/>
    </location>
</feature>
<feature type="region of interest" description="Disordered" evidence="3">
    <location>
        <begin position="1162"/>
        <end position="1201"/>
    </location>
</feature>
<feature type="compositionally biased region" description="Basic and acidic residues" evidence="3">
    <location>
        <begin position="1162"/>
        <end position="1180"/>
    </location>
</feature>
<feature type="compositionally biased region" description="Polar residues" evidence="3">
    <location>
        <begin position="1185"/>
        <end position="1201"/>
    </location>
</feature>
<feature type="binding site" evidence="2">
    <location>
        <begin position="33"/>
        <end position="40"/>
    </location>
    <ligand>
        <name>ATP</name>
        <dbReference type="ChEBI" id="CHEBI:30616"/>
    </ligand>
</feature>
<reference key="1">
    <citation type="journal article" date="1999" name="Nature">
        <title>Sequence and analysis of chromosome 4 of the plant Arabidopsis thaliana.</title>
        <authorList>
            <person name="Mayer K.F.X."/>
            <person name="Schueller C."/>
            <person name="Wambutt R."/>
            <person name="Murphy G."/>
            <person name="Volckaert G."/>
            <person name="Pohl T."/>
            <person name="Duesterhoeft A."/>
            <person name="Stiekema W."/>
            <person name="Entian K.-D."/>
            <person name="Terryn N."/>
            <person name="Harris B."/>
            <person name="Ansorge W."/>
            <person name="Brandt P."/>
            <person name="Grivell L.A."/>
            <person name="Rieger M."/>
            <person name="Weichselgartner M."/>
            <person name="de Simone V."/>
            <person name="Obermaier B."/>
            <person name="Mache R."/>
            <person name="Mueller M."/>
            <person name="Kreis M."/>
            <person name="Delseny M."/>
            <person name="Puigdomenech P."/>
            <person name="Watson M."/>
            <person name="Schmidtheini T."/>
            <person name="Reichert B."/>
            <person name="Portetelle D."/>
            <person name="Perez-Alonso M."/>
            <person name="Boutry M."/>
            <person name="Bancroft I."/>
            <person name="Vos P."/>
            <person name="Hoheisel J."/>
            <person name="Zimmermann W."/>
            <person name="Wedler H."/>
            <person name="Ridley P."/>
            <person name="Langham S.-A."/>
            <person name="McCullagh B."/>
            <person name="Bilham L."/>
            <person name="Robben J."/>
            <person name="van der Schueren J."/>
            <person name="Grymonprez B."/>
            <person name="Chuang Y.-J."/>
            <person name="Vandenbussche F."/>
            <person name="Braeken M."/>
            <person name="Weltjens I."/>
            <person name="Voet M."/>
            <person name="Bastiaens I."/>
            <person name="Aert R."/>
            <person name="Defoor E."/>
            <person name="Weitzenegger T."/>
            <person name="Bothe G."/>
            <person name="Ramsperger U."/>
            <person name="Hilbert H."/>
            <person name="Braun M."/>
            <person name="Holzer E."/>
            <person name="Brandt A."/>
            <person name="Peters S."/>
            <person name="van Staveren M."/>
            <person name="Dirkse W."/>
            <person name="Mooijman P."/>
            <person name="Klein Lankhorst R."/>
            <person name="Rose M."/>
            <person name="Hauf J."/>
            <person name="Koetter P."/>
            <person name="Berneiser S."/>
            <person name="Hempel S."/>
            <person name="Feldpausch M."/>
            <person name="Lamberth S."/>
            <person name="Van den Daele H."/>
            <person name="De Keyser A."/>
            <person name="Buysshaert C."/>
            <person name="Gielen J."/>
            <person name="Villarroel R."/>
            <person name="De Clercq R."/>
            <person name="van Montagu M."/>
            <person name="Rogers J."/>
            <person name="Cronin A."/>
            <person name="Quail M.A."/>
            <person name="Bray-Allen S."/>
            <person name="Clark L."/>
            <person name="Doggett J."/>
            <person name="Hall S."/>
            <person name="Kay M."/>
            <person name="Lennard N."/>
            <person name="McLay K."/>
            <person name="Mayes R."/>
            <person name="Pettett A."/>
            <person name="Rajandream M.A."/>
            <person name="Lyne M."/>
            <person name="Benes V."/>
            <person name="Rechmann S."/>
            <person name="Borkova D."/>
            <person name="Bloecker H."/>
            <person name="Scharfe M."/>
            <person name="Grimm M."/>
            <person name="Loehnert T.-H."/>
            <person name="Dose S."/>
            <person name="de Haan M."/>
            <person name="Maarse A.C."/>
            <person name="Schaefer M."/>
            <person name="Mueller-Auer S."/>
            <person name="Gabel C."/>
            <person name="Fuchs M."/>
            <person name="Fartmann B."/>
            <person name="Granderath K."/>
            <person name="Dauner D."/>
            <person name="Herzl A."/>
            <person name="Neumann S."/>
            <person name="Argiriou A."/>
            <person name="Vitale D."/>
            <person name="Liguori R."/>
            <person name="Piravandi E."/>
            <person name="Massenet O."/>
            <person name="Quigley F."/>
            <person name="Clabauld G."/>
            <person name="Muendlein A."/>
            <person name="Felber R."/>
            <person name="Schnabl S."/>
            <person name="Hiller R."/>
            <person name="Schmidt W."/>
            <person name="Lecharny A."/>
            <person name="Aubourg S."/>
            <person name="Chefdor F."/>
            <person name="Cooke R."/>
            <person name="Berger C."/>
            <person name="Monfort A."/>
            <person name="Casacuberta E."/>
            <person name="Gibbons T."/>
            <person name="Weber N."/>
            <person name="Vandenbol M."/>
            <person name="Bargues M."/>
            <person name="Terol J."/>
            <person name="Torres A."/>
            <person name="Perez-Perez A."/>
            <person name="Purnelle B."/>
            <person name="Bent E."/>
            <person name="Johnson S."/>
            <person name="Tacon D."/>
            <person name="Jesse T."/>
            <person name="Heijnen L."/>
            <person name="Schwarz S."/>
            <person name="Scholler P."/>
            <person name="Heber S."/>
            <person name="Francs P."/>
            <person name="Bielke C."/>
            <person name="Frishman D."/>
            <person name="Haase D."/>
            <person name="Lemcke K."/>
            <person name="Mewes H.-W."/>
            <person name="Stocker S."/>
            <person name="Zaccaria P."/>
            <person name="Bevan M."/>
            <person name="Wilson R.K."/>
            <person name="de la Bastide M."/>
            <person name="Habermann K."/>
            <person name="Parnell L."/>
            <person name="Dedhia N."/>
            <person name="Gnoj L."/>
            <person name="Schutz K."/>
            <person name="Huang E."/>
            <person name="Spiegel L."/>
            <person name="Sekhon M."/>
            <person name="Murray J."/>
            <person name="Sheet P."/>
            <person name="Cordes M."/>
            <person name="Abu-Threideh J."/>
            <person name="Stoneking T."/>
            <person name="Kalicki J."/>
            <person name="Graves T."/>
            <person name="Harmon G."/>
            <person name="Edwards J."/>
            <person name="Latreille P."/>
            <person name="Courtney L."/>
            <person name="Cloud J."/>
            <person name="Abbott A."/>
            <person name="Scott K."/>
            <person name="Johnson D."/>
            <person name="Minx P."/>
            <person name="Bentley D."/>
            <person name="Fulton B."/>
            <person name="Miller N."/>
            <person name="Greco T."/>
            <person name="Kemp K."/>
            <person name="Kramer J."/>
            <person name="Fulton L."/>
            <person name="Mardis E."/>
            <person name="Dante M."/>
            <person name="Pepin K."/>
            <person name="Hillier L.W."/>
            <person name="Nelson J."/>
            <person name="Spieth J."/>
            <person name="Ryan E."/>
            <person name="Andrews S."/>
            <person name="Geisel C."/>
            <person name="Layman D."/>
            <person name="Du H."/>
            <person name="Ali J."/>
            <person name="Berghoff A."/>
            <person name="Jones K."/>
            <person name="Drone K."/>
            <person name="Cotton M."/>
            <person name="Joshu C."/>
            <person name="Antonoiu B."/>
            <person name="Zidanic M."/>
            <person name="Strong C."/>
            <person name="Sun H."/>
            <person name="Lamar B."/>
            <person name="Yordan C."/>
            <person name="Ma P."/>
            <person name="Zhong J."/>
            <person name="Preston R."/>
            <person name="Vil D."/>
            <person name="Shekher M."/>
            <person name="Matero A."/>
            <person name="Shah R."/>
            <person name="Swaby I.K."/>
            <person name="O'Shaughnessy A."/>
            <person name="Rodriguez M."/>
            <person name="Hoffman J."/>
            <person name="Till S."/>
            <person name="Granat S."/>
            <person name="Shohdy N."/>
            <person name="Hasegawa A."/>
            <person name="Hameed A."/>
            <person name="Lodhi M."/>
            <person name="Johnson A."/>
            <person name="Chen E."/>
            <person name="Marra M.A."/>
            <person name="Martienssen R."/>
            <person name="McCombie W.R."/>
        </authorList>
    </citation>
    <scope>NUCLEOTIDE SEQUENCE [LARGE SCALE GENOMIC DNA]</scope>
    <source>
        <strain>cv. Columbia</strain>
    </source>
</reference>
<reference key="2">
    <citation type="journal article" date="2017" name="Plant J.">
        <title>Araport11: a complete reannotation of the Arabidopsis thaliana reference genome.</title>
        <authorList>
            <person name="Cheng C.Y."/>
            <person name="Krishnakumar V."/>
            <person name="Chan A.P."/>
            <person name="Thibaud-Nissen F."/>
            <person name="Schobel S."/>
            <person name="Town C.D."/>
        </authorList>
    </citation>
    <scope>GENOME REANNOTATION</scope>
    <source>
        <strain>cv. Columbia</strain>
    </source>
</reference>
<reference key="3">
    <citation type="journal article" date="2003" name="Plant Cell">
        <title>Genome-wide analysis of NBS-LRR-encoding genes in Arabidopsis.</title>
        <authorList>
            <person name="Meyers B.C."/>
            <person name="Kozik A."/>
            <person name="Griego A."/>
            <person name="Kuang H."/>
            <person name="Michelmore R.W."/>
        </authorList>
    </citation>
    <scope>GENE STRUCTURE</scope>
</reference>
<protein>
    <recommendedName>
        <fullName>Putative disease resistance protein At4g19050</fullName>
    </recommendedName>
</protein>